<name>UL32_ALHV1</name>
<evidence type="ECO:0000250" key="1"/>
<evidence type="ECO:0000255" key="2">
    <source>
        <dbReference type="PROSITE-ProRule" id="PRU01332"/>
    </source>
</evidence>
<evidence type="ECO:0000305" key="3"/>
<feature type="chain" id="PRO_0000405766" description="Packaging protein UL32 homolog">
    <location>
        <begin position="1"/>
        <end position="468"/>
    </location>
</feature>
<feature type="region of interest" description="Zinc finger 1" evidence="2">
    <location>
        <begin position="59"/>
        <end position="138"/>
    </location>
</feature>
<feature type="region of interest" description="Zinc finger 2" evidence="2">
    <location>
        <begin position="296"/>
        <end position="374"/>
    </location>
</feature>
<feature type="binding site" evidence="2">
    <location>
        <position position="59"/>
    </location>
    <ligand>
        <name>Zn(2+)</name>
        <dbReference type="ChEBI" id="CHEBI:29105"/>
        <label>1</label>
    </ligand>
</feature>
<feature type="binding site" evidence="2">
    <location>
        <position position="62"/>
    </location>
    <ligand>
        <name>Zn(2+)</name>
        <dbReference type="ChEBI" id="CHEBI:29105"/>
        <label>1</label>
    </ligand>
</feature>
<feature type="binding site" evidence="2">
    <location>
        <position position="132"/>
    </location>
    <ligand>
        <name>Zn(2+)</name>
        <dbReference type="ChEBI" id="CHEBI:29105"/>
        <label>1</label>
    </ligand>
</feature>
<feature type="binding site" evidence="2">
    <location>
        <position position="138"/>
    </location>
    <ligand>
        <name>Zn(2+)</name>
        <dbReference type="ChEBI" id="CHEBI:29105"/>
        <label>1</label>
    </ligand>
</feature>
<feature type="binding site" evidence="2">
    <location>
        <position position="296"/>
    </location>
    <ligand>
        <name>Zn(2+)</name>
        <dbReference type="ChEBI" id="CHEBI:29105"/>
        <label>2</label>
    </ligand>
</feature>
<feature type="binding site" evidence="2">
    <location>
        <position position="299"/>
    </location>
    <ligand>
        <name>Zn(2+)</name>
        <dbReference type="ChEBI" id="CHEBI:29105"/>
        <label>2</label>
    </ligand>
</feature>
<feature type="binding site" evidence="2">
    <location>
        <position position="367"/>
    </location>
    <ligand>
        <name>Zn(2+)</name>
        <dbReference type="ChEBI" id="CHEBI:29105"/>
        <label>2</label>
    </ligand>
</feature>
<feature type="binding site" evidence="2">
    <location>
        <position position="374"/>
    </location>
    <ligand>
        <name>Zn(2+)</name>
        <dbReference type="ChEBI" id="CHEBI:29105"/>
        <label>2</label>
    </ligand>
</feature>
<keyword id="KW-1035">Host cytoplasm</keyword>
<keyword id="KW-1048">Host nucleus</keyword>
<keyword id="KW-0479">Metal-binding</keyword>
<keyword id="KW-1185">Reference proteome</keyword>
<keyword id="KW-0862">Zinc</keyword>
<keyword id="KW-0863">Zinc-finger</keyword>
<gene>
    <name type="primary">68</name>
</gene>
<dbReference type="EMBL" id="AF005370">
    <property type="protein sequence ID" value="AAC58116.1"/>
    <property type="molecule type" value="Genomic_DNA"/>
</dbReference>
<dbReference type="PIR" id="T03164">
    <property type="entry name" value="T03164"/>
</dbReference>
<dbReference type="RefSeq" id="NP_065568.1">
    <property type="nucleotide sequence ID" value="NC_002531.1"/>
</dbReference>
<dbReference type="SMR" id="O36419"/>
<dbReference type="KEGG" id="vg:911771"/>
<dbReference type="Proteomes" id="UP000000941">
    <property type="component" value="Segment"/>
</dbReference>
<dbReference type="GO" id="GO:0030430">
    <property type="term" value="C:host cell cytoplasm"/>
    <property type="evidence" value="ECO:0007669"/>
    <property type="project" value="UniProtKB-SubCell"/>
</dbReference>
<dbReference type="GO" id="GO:0042025">
    <property type="term" value="C:host cell nucleus"/>
    <property type="evidence" value="ECO:0007669"/>
    <property type="project" value="UniProtKB-SubCell"/>
</dbReference>
<dbReference type="GO" id="GO:0019031">
    <property type="term" value="C:viral envelope"/>
    <property type="evidence" value="ECO:0007669"/>
    <property type="project" value="InterPro"/>
</dbReference>
<dbReference type="GO" id="GO:0008270">
    <property type="term" value="F:zinc ion binding"/>
    <property type="evidence" value="ECO:0007669"/>
    <property type="project" value="UniProtKB-KW"/>
</dbReference>
<dbReference type="InterPro" id="IPR002597">
    <property type="entry name" value="Herpes_env"/>
</dbReference>
<dbReference type="Pfam" id="PF01673">
    <property type="entry name" value="Herpes_env"/>
    <property type="match status" value="1"/>
</dbReference>
<dbReference type="PROSITE" id="PS51988">
    <property type="entry name" value="HERPESVIRUS_UL32"/>
    <property type="match status" value="1"/>
</dbReference>
<organismHost>
    <name type="scientific">Connochaetes taurinus</name>
    <name type="common">Blue wildebeest</name>
    <dbReference type="NCBI Taxonomy" id="9927"/>
</organismHost>
<sequence>MSSNKTSSFVPWKVATILKHQKTLEAVIQKAFLPGDPAEALNSSQFCETTAALDSTAPCKICQCLHQLCTHHSPDLSFYGDYAIICYYALHAPKTMASNLMLLADCLELIQLYFPDAPSPPPNINGLDIYLHFFVNRCFRLANTEKIMEWSNLDMLKTEFLRATLSGSLSGAFCFKTLWPSLTRAPVRMADECTCTPITNPGCGLDGGKLFHPACIGKDNFLDLILIFWKNTDAMTPANSLLADTLSRHQVYFQNLTPVETNASLDPSPALDTTQGPCLLSPALCLQKKNHTSSLCLLCECLASHSEAASVFQTFKHLVLNSINNKVKLLDRILFLQQDADSLSFIQDRELLKSVLVNCSPQEIHKHLFCDPLCALNSSLTDSVVLFGEVPDFEFTAFKATLATGNSLVHRSFQSCEILETLILLFKSLQTVKANKTTVSEIIKEVDASLKKHKFSLLSCYYTFNIYT</sequence>
<comment type="function">
    <text evidence="1">Plays a role in efficient localization of neo-synthesized capsids to nuclear replication compartments, thereby controlling cleavage and packaging of virus genomic DNA.</text>
</comment>
<comment type="subcellular location">
    <subcellularLocation>
        <location>Host cytoplasm</location>
    </subcellularLocation>
    <subcellularLocation>
        <location evidence="1">Host nucleus</location>
    </subcellularLocation>
</comment>
<comment type="similarity">
    <text evidence="3">Belongs to the herpesviridae UL32 protein family.</text>
</comment>
<organism>
    <name type="scientific">Alcelaphine herpesvirus 1 (strain C500)</name>
    <name type="common">AlHV-1</name>
    <name type="synonym">Malignant catarrhal fever virus</name>
    <dbReference type="NCBI Taxonomy" id="654901"/>
    <lineage>
        <taxon>Viruses</taxon>
        <taxon>Duplodnaviria</taxon>
        <taxon>Heunggongvirae</taxon>
        <taxon>Peploviricota</taxon>
        <taxon>Herviviricetes</taxon>
        <taxon>Herpesvirales</taxon>
        <taxon>Orthoherpesviridae</taxon>
        <taxon>Gammaherpesvirinae</taxon>
        <taxon>Macavirus</taxon>
        <taxon>Macavirus alcelaphinegamma1</taxon>
    </lineage>
</organism>
<reference key="1">
    <citation type="journal article" date="1997" name="J. Virol.">
        <title>Primary structure of the alcelaphine herpesvirus 1 genome.</title>
        <authorList>
            <person name="Ensser A."/>
            <person name="Pflanz R."/>
            <person name="Fleckenstein B."/>
        </authorList>
    </citation>
    <scope>NUCLEOTIDE SEQUENCE [LARGE SCALE GENOMIC DNA]</scope>
</reference>
<accession>O36419</accession>
<protein>
    <recommendedName>
        <fullName>Packaging protein UL32 homolog</fullName>
    </recommendedName>
</protein>
<proteinExistence type="inferred from homology"/>